<protein>
    <recommendedName>
        <fullName evidence="1">Large ribosomal subunit protein uL15</fullName>
    </recommendedName>
    <alternativeName>
        <fullName evidence="3">50S ribosomal protein L15</fullName>
    </alternativeName>
</protein>
<keyword id="KW-1185">Reference proteome</keyword>
<keyword id="KW-0687">Ribonucleoprotein</keyword>
<keyword id="KW-0689">Ribosomal protein</keyword>
<keyword id="KW-0694">RNA-binding</keyword>
<keyword id="KW-0699">rRNA-binding</keyword>
<gene>
    <name evidence="1" type="primary">rplO</name>
    <name type="ordered locus">Nham_1564</name>
</gene>
<feature type="chain" id="PRO_0000251531" description="Large ribosomal subunit protein uL15">
    <location>
        <begin position="1"/>
        <end position="161"/>
    </location>
</feature>
<feature type="region of interest" description="Disordered" evidence="2">
    <location>
        <begin position="1"/>
        <end position="43"/>
    </location>
</feature>
<feature type="compositionally biased region" description="Gly residues" evidence="2">
    <location>
        <begin position="21"/>
        <end position="37"/>
    </location>
</feature>
<proteinExistence type="inferred from homology"/>
<evidence type="ECO:0000255" key="1">
    <source>
        <dbReference type="HAMAP-Rule" id="MF_01341"/>
    </source>
</evidence>
<evidence type="ECO:0000256" key="2">
    <source>
        <dbReference type="SAM" id="MobiDB-lite"/>
    </source>
</evidence>
<evidence type="ECO:0000305" key="3"/>
<sequence length="161" mass="16915">MKLSDIADNAGSRKKRMRIGRGIGSGKGKTGGRGGKGQTARSGVRIKGFEGGQMPLHRRLPKRGFNNIFRVEFAEINLDRLQDAIDAGSIDAKSTVNAESLVKSGVVRRAKGGVRLLGRGEIKAKLTIEVHGASKSAIAAVEKAGGTVKILAPKKDEGEAA</sequence>
<comment type="function">
    <text evidence="1">Binds to the 23S rRNA.</text>
</comment>
<comment type="subunit">
    <text evidence="1">Part of the 50S ribosomal subunit.</text>
</comment>
<comment type="similarity">
    <text evidence="1">Belongs to the universal ribosomal protein uL15 family.</text>
</comment>
<name>RL15_NITHX</name>
<dbReference type="EMBL" id="CP000319">
    <property type="protein sequence ID" value="ABE62386.1"/>
    <property type="molecule type" value="Genomic_DNA"/>
</dbReference>
<dbReference type="RefSeq" id="WP_011510072.1">
    <property type="nucleotide sequence ID" value="NC_007964.1"/>
</dbReference>
<dbReference type="SMR" id="Q1QN11"/>
<dbReference type="STRING" id="323097.Nham_1564"/>
<dbReference type="KEGG" id="nha:Nham_1564"/>
<dbReference type="eggNOG" id="COG0200">
    <property type="taxonomic scope" value="Bacteria"/>
</dbReference>
<dbReference type="HOGENOM" id="CLU_055188_4_0_5"/>
<dbReference type="OrthoDB" id="9810293at2"/>
<dbReference type="Proteomes" id="UP000001953">
    <property type="component" value="Chromosome"/>
</dbReference>
<dbReference type="GO" id="GO:0022625">
    <property type="term" value="C:cytosolic large ribosomal subunit"/>
    <property type="evidence" value="ECO:0007669"/>
    <property type="project" value="TreeGrafter"/>
</dbReference>
<dbReference type="GO" id="GO:0019843">
    <property type="term" value="F:rRNA binding"/>
    <property type="evidence" value="ECO:0007669"/>
    <property type="project" value="UniProtKB-UniRule"/>
</dbReference>
<dbReference type="GO" id="GO:0003735">
    <property type="term" value="F:structural constituent of ribosome"/>
    <property type="evidence" value="ECO:0007669"/>
    <property type="project" value="InterPro"/>
</dbReference>
<dbReference type="GO" id="GO:0006412">
    <property type="term" value="P:translation"/>
    <property type="evidence" value="ECO:0007669"/>
    <property type="project" value="UniProtKB-UniRule"/>
</dbReference>
<dbReference type="Gene3D" id="3.100.10.10">
    <property type="match status" value="1"/>
</dbReference>
<dbReference type="HAMAP" id="MF_01341">
    <property type="entry name" value="Ribosomal_uL15"/>
    <property type="match status" value="1"/>
</dbReference>
<dbReference type="InterPro" id="IPR030878">
    <property type="entry name" value="Ribosomal_uL15"/>
</dbReference>
<dbReference type="InterPro" id="IPR021131">
    <property type="entry name" value="Ribosomal_uL15/eL18"/>
</dbReference>
<dbReference type="InterPro" id="IPR036227">
    <property type="entry name" value="Ribosomal_uL15/eL18_sf"/>
</dbReference>
<dbReference type="InterPro" id="IPR005749">
    <property type="entry name" value="Ribosomal_uL15_bac-type"/>
</dbReference>
<dbReference type="InterPro" id="IPR001196">
    <property type="entry name" value="Ribosomal_uL15_CS"/>
</dbReference>
<dbReference type="NCBIfam" id="TIGR01071">
    <property type="entry name" value="rplO_bact"/>
    <property type="match status" value="1"/>
</dbReference>
<dbReference type="PANTHER" id="PTHR12934">
    <property type="entry name" value="50S RIBOSOMAL PROTEIN L15"/>
    <property type="match status" value="1"/>
</dbReference>
<dbReference type="PANTHER" id="PTHR12934:SF11">
    <property type="entry name" value="LARGE RIBOSOMAL SUBUNIT PROTEIN UL15M"/>
    <property type="match status" value="1"/>
</dbReference>
<dbReference type="Pfam" id="PF00828">
    <property type="entry name" value="Ribosomal_L27A"/>
    <property type="match status" value="1"/>
</dbReference>
<dbReference type="SUPFAM" id="SSF52080">
    <property type="entry name" value="Ribosomal proteins L15p and L18e"/>
    <property type="match status" value="1"/>
</dbReference>
<dbReference type="PROSITE" id="PS00475">
    <property type="entry name" value="RIBOSOMAL_L15"/>
    <property type="match status" value="1"/>
</dbReference>
<organism>
    <name type="scientific">Nitrobacter hamburgensis (strain DSM 10229 / NCIMB 13809 / X14)</name>
    <dbReference type="NCBI Taxonomy" id="323097"/>
    <lineage>
        <taxon>Bacteria</taxon>
        <taxon>Pseudomonadati</taxon>
        <taxon>Pseudomonadota</taxon>
        <taxon>Alphaproteobacteria</taxon>
        <taxon>Hyphomicrobiales</taxon>
        <taxon>Nitrobacteraceae</taxon>
        <taxon>Nitrobacter</taxon>
    </lineage>
</organism>
<accession>Q1QN11</accession>
<reference key="1">
    <citation type="submission" date="2006-03" db="EMBL/GenBank/DDBJ databases">
        <title>Complete sequence of chromosome of Nitrobacter hamburgensis X14.</title>
        <authorList>
            <consortium name="US DOE Joint Genome Institute"/>
            <person name="Copeland A."/>
            <person name="Lucas S."/>
            <person name="Lapidus A."/>
            <person name="Barry K."/>
            <person name="Detter J.C."/>
            <person name="Glavina del Rio T."/>
            <person name="Hammon N."/>
            <person name="Israni S."/>
            <person name="Dalin E."/>
            <person name="Tice H."/>
            <person name="Pitluck S."/>
            <person name="Chain P."/>
            <person name="Malfatti S."/>
            <person name="Shin M."/>
            <person name="Vergez L."/>
            <person name="Schmutz J."/>
            <person name="Larimer F."/>
            <person name="Land M."/>
            <person name="Hauser L."/>
            <person name="Kyrpides N."/>
            <person name="Ivanova N."/>
            <person name="Ward B."/>
            <person name="Arp D."/>
            <person name="Klotz M."/>
            <person name="Stein L."/>
            <person name="O'Mullan G."/>
            <person name="Starkenburg S."/>
            <person name="Sayavedra L."/>
            <person name="Poret-Peterson A.T."/>
            <person name="Gentry M.E."/>
            <person name="Bruce D."/>
            <person name="Richardson P."/>
        </authorList>
    </citation>
    <scope>NUCLEOTIDE SEQUENCE [LARGE SCALE GENOMIC DNA]</scope>
    <source>
        <strain>DSM 10229 / NCIMB 13809 / X14</strain>
    </source>
</reference>